<accession>Q2FZ08</accession>
<accession>A9ZP05</accession>
<protein>
    <recommendedName>
        <fullName>Ribonuclease Y</fullName>
        <shortName>RNase Y</shortName>
        <ecNumber>3.1.-.-</ecNumber>
    </recommendedName>
    <alternativeName>
        <fullName>Conserved virulence factor A</fullName>
    </alternativeName>
</protein>
<feature type="chain" id="PRO_0000294066" description="Ribonuclease Y">
    <location>
        <begin position="1"/>
        <end position="519"/>
    </location>
</feature>
<feature type="transmembrane region" description="Helical" evidence="2">
    <location>
        <begin position="3"/>
        <end position="23"/>
    </location>
</feature>
<feature type="domain" description="KH">
    <location>
        <begin position="209"/>
        <end position="269"/>
    </location>
</feature>
<feature type="domain" description="HD" evidence="3">
    <location>
        <begin position="335"/>
        <end position="428"/>
    </location>
</feature>
<feature type="mutagenesis site" description="Decrease in hemolysin and DNase production and virulence in silkworm-infection model." evidence="4">
    <original>G</original>
    <variation>A</variation>
    <location>
        <position position="229"/>
    </location>
</feature>
<feature type="mutagenesis site" description="Decrease in hemolysin and DNase production and virulence in silkworm-infection model." evidence="4">
    <original>I</original>
    <variation>N</variation>
    <location>
        <position position="232"/>
    </location>
</feature>
<feature type="mutagenesis site" description="Decrease in phosphodiesterase activity, hemolysin production and virulence in silkworm-infection model." evidence="6">
    <original>H</original>
    <variation>A</variation>
    <location>
        <position position="338"/>
    </location>
</feature>
<feature type="mutagenesis site" description="Decrease in phosphodiesterase activity, hemolysin production and virulence in silkworm-infection model." evidence="6">
    <original>H</original>
    <variation>A</variation>
    <location>
        <position position="367"/>
    </location>
</feature>
<feature type="mutagenesis site" description="Decrease in phosphodiesterase activity, hemolysin production and virulence in silkworm-infection model." evidence="6">
    <original>D</original>
    <variation>A</variation>
    <location>
        <position position="368"/>
    </location>
</feature>
<feature type="mutagenesis site" description="Decrease in phosphodiesterase activity, hemolysin production and virulence in silkworm-infection model." evidence="6">
    <original>K</original>
    <variation>A</variation>
    <location>
        <position position="371"/>
    </location>
</feature>
<feature type="mutagenesis site" description="Decrease in phosphodiesterase activity, hemolysin and DNase production and virulence in silkworm-infection model." evidence="4 6">
    <original>D</original>
    <variation>A</variation>
    <location>
        <position position="423"/>
    </location>
</feature>
<keyword id="KW-1003">Cell membrane</keyword>
<keyword id="KW-0255">Endonuclease</keyword>
<keyword id="KW-0378">Hydrolase</keyword>
<keyword id="KW-0472">Membrane</keyword>
<keyword id="KW-0540">Nuclease</keyword>
<keyword id="KW-1185">Reference proteome</keyword>
<keyword id="KW-0694">RNA-binding</keyword>
<keyword id="KW-0812">Transmembrane</keyword>
<keyword id="KW-1133">Transmembrane helix</keyword>
<keyword id="KW-0843">Virulence</keyword>
<name>RNY_STAA8</name>
<reference key="1">
    <citation type="journal article" date="2008" name="J. Biol. Chem.">
        <title>Phosphodiesterase activity of CvfA is required for virulence in Staphylococcus aureus.</title>
        <authorList>
            <person name="Nagata M."/>
            <person name="Kaito C."/>
            <person name="Sekimizu K."/>
        </authorList>
    </citation>
    <scope>NUCLEOTIDE SEQUENCE [GENOMIC DNA]</scope>
    <scope>FUNCTION AS A PHOSPHODIESTERASE</scope>
    <scope>BIOPHYSICOCHEMICAL PROPERTIES</scope>
    <scope>SUBCELLULAR LOCATION</scope>
    <scope>MUTAGENESIS OF HIS-338; HIS-367; ASP-368; LYS-371 AND ASP-423</scope>
</reference>
<reference key="2">
    <citation type="book" date="2006" name="Gram positive pathogens, 2nd edition">
        <title>The Staphylococcus aureus NCTC 8325 genome.</title>
        <editorList>
            <person name="Fischetti V."/>
            <person name="Novick R."/>
            <person name="Ferretti J."/>
            <person name="Portnoy D."/>
            <person name="Rood J."/>
        </editorList>
        <authorList>
            <person name="Gillaspy A.F."/>
            <person name="Worrell V."/>
            <person name="Orvis J."/>
            <person name="Roe B.A."/>
            <person name="Dyer D.W."/>
            <person name="Iandolo J.J."/>
        </authorList>
    </citation>
    <scope>NUCLEOTIDE SEQUENCE [LARGE SCALE GENOMIC DNA]</scope>
    <source>
        <strain>NCTC 8325 / PS 47</strain>
    </source>
</reference>
<reference key="3">
    <citation type="journal article" date="2005" name="Mol. Microbiol.">
        <title>Silkworm pathogenic bacteria infection model for identification of novel virulence genes.</title>
        <authorList>
            <person name="Kaito C."/>
            <person name="Kurokawa K."/>
            <person name="Matsumoto Y."/>
            <person name="Terao Y."/>
            <person name="Kawabata S."/>
            <person name="Hamada S."/>
            <person name="Sekimizu K."/>
        </authorList>
    </citation>
    <scope>FUNCTION IN EXOTOXIN PRODUCTION AND VIRULENCE</scope>
    <scope>AGR EXPRESSION</scope>
    <scope>MUTAGENESIS OF GLY-229; ILE-232 AND ASP-423</scope>
</reference>
<reference key="4">
    <citation type="journal article" date="2006" name="Mol. Microbiol.">
        <title>Novel DNA binding protein SarZ contributes to virulence in Staphylococcus aureus.</title>
        <authorList>
            <person name="Kaito C."/>
            <person name="Morishita D."/>
            <person name="Matsumoto Y."/>
            <person name="Kurokawa K."/>
            <person name="Sekimizu K."/>
        </authorList>
    </citation>
    <scope>FUNCTION IN SARZ EXPRESSION</scope>
</reference>
<reference key="5">
    <citation type="journal article" date="2011" name="J. Bacteriol.">
        <title>Characterization of components of the Staphylococcus aureus mRNA degradosome holoenzyme-like complex.</title>
        <authorList>
            <person name="Roux C.M."/>
            <person name="DeMuth J.P."/>
            <person name="Dunman P.M."/>
        </authorList>
    </citation>
    <scope>INTERACTION WITH CSHA AND ENO</scope>
    <scope>SUBUNIT</scope>
    <source>
        <strain>UAMS-1</strain>
    </source>
</reference>
<reference key="6">
    <citation type="journal article" date="2012" name="Appl. Environ. Microbiol.">
        <title>New range of vectors with a stringent 5-fluoroorotic acid-based counterselection system for generating mutants by allelic replacement in Staphylococcus aureus.</title>
        <authorList>
            <person name="Redder P."/>
            <person name="Linder P."/>
        </authorList>
    </citation>
    <scope>DISRUPTION PHENOTYPE</scope>
    <source>
        <strain>SA564</strain>
    </source>
</reference>
<organism>
    <name type="scientific">Staphylococcus aureus (strain NCTC 8325 / PS 47)</name>
    <dbReference type="NCBI Taxonomy" id="93061"/>
    <lineage>
        <taxon>Bacteria</taxon>
        <taxon>Bacillati</taxon>
        <taxon>Bacillota</taxon>
        <taxon>Bacilli</taxon>
        <taxon>Bacillales</taxon>
        <taxon>Staphylococcaceae</taxon>
        <taxon>Staphylococcus</taxon>
    </lineage>
</organism>
<evidence type="ECO:0000250" key="1"/>
<evidence type="ECO:0000255" key="2"/>
<evidence type="ECO:0000255" key="3">
    <source>
        <dbReference type="PROSITE-ProRule" id="PRU01175"/>
    </source>
</evidence>
<evidence type="ECO:0000269" key="4">
    <source>
    </source>
</evidence>
<evidence type="ECO:0000269" key="5">
    <source>
    </source>
</evidence>
<evidence type="ECO:0000269" key="6">
    <source>
    </source>
</evidence>
<evidence type="ECO:0000269" key="7">
    <source>
    </source>
</evidence>
<evidence type="ECO:0000269" key="8">
    <source>
    </source>
</evidence>
<evidence type="ECO:0000305" key="9"/>
<sequence length="519" mass="58512">MNLLSLLLILLGIILGVVGGYVVARNLLLQKQSQARQTAEDIVNQAHKEADNIKKEKLLEAKEENQILREQTEAELRERRSELQRQETRLLQKEENLERKSDLLDKKDEILEQKESKIEEKQQQVDAKESSVQTLIMKHEQELERISGLTQEEAINEQLQRVEEELSQDIAVLVKEKEKEAKEKVDKTAKELLATAVQRLAADHTSESTVSVVNLPNDEMKGRIIGREGRNIRTLETLTGIDLIIDDTPEAVILSGFDPIRREIARTALVNLVSDGRIHPGRIEDMVEKARKEVDDIIREAGEQATFEVNAHNMHPDLVKIVGRLNYRTSYGQNVLKHSIEVAHLASMLAAELGEDETLAKRAGLLHDVGKAIDHEVEGSHVEIGVELAKKYGENETVINAIHSHHGDVEPTSIISILVAAADALSAARPGARKETLENYIRRLERLETLSESYDGVEKAFAIQAGREIRVIVSPEEIDDLKSYRLARDIKNQIEDELQYPGHIKVTVVRETRAVEYAK</sequence>
<proteinExistence type="evidence at protein level"/>
<comment type="function">
    <text evidence="1 4 5 6">Endoribonuclease that initiates mRNA decay (By similarity). In vitro, catalyzes the hydrolysis of both 2',3'-cyclic AMP and 2',3'-cyclic GMP into 3'-AMP and 3'-GMP, respectively, at the 3'-terminal of RNA. Activates sarZ and agr operon resulting in the expression of virulence genes such as hemolysin, DNase and protease. Contributes to virulence in both silkworm-infection model and mice.</text>
</comment>
<comment type="cofactor">
    <cofactor>
        <name>Mn(2+)</name>
        <dbReference type="ChEBI" id="CHEBI:29035"/>
    </cofactor>
</comment>
<comment type="biophysicochemical properties">
    <kinetics>
        <KM evidence="6">30 mM for bis-p-nitrophenyl phosphate (bis-pNPP)</KM>
        <KM evidence="6">17 mM for 2',3'-cAMP</KM>
        <KM evidence="6">15 mM for 2',3'-cGMP</KM>
        <KM evidence="6">1.1 uM for 2',3'-cGMP at the 3'-terminal of RNA</KM>
        <Vmax evidence="6">0.75 umol/min/mg enzyme with bis-p-nitrophenyl phosphate (bis-pNPP) as substrate</Vmax>
        <Vmax evidence="6">0.93 umol/min/mg enzyme with 2',3'-cAMP as substrate</Vmax>
        <Vmax evidence="6">0.38 umol/min/mg enzyme with 2',3'-cGMP as substrate</Vmax>
        <Vmax evidence="6">0.0015 umol/min/mg enzyme with 2',3'-cGMP at the 3'-terminal of RNA as substrate</Vmax>
    </kinetics>
    <phDependence>
        <text evidence="6">Optimum pH is 9.0.</text>
    </phDependence>
</comment>
<comment type="subunit">
    <text evidence="7 9">Homodimer (Probable). Component of a possible RNA degradosome complex composed of cshA, eno, pfkA, pnp, rnjA, rnjB, rnpA and rny. Interacts specifically with RNA helicase CshA and enolase.</text>
</comment>
<comment type="subcellular location">
    <subcellularLocation>
        <location evidence="6">Cell membrane</location>
        <topology evidence="6">Single-pass membrane protein</topology>
    </subcellularLocation>
</comment>
<comment type="disruption phenotype">
    <text evidence="8">No visible phenotype.</text>
</comment>
<comment type="similarity">
    <text evidence="9">Belongs to the RNase Y family.</text>
</comment>
<dbReference type="EC" id="3.1.-.-"/>
<dbReference type="EMBL" id="AB325528">
    <property type="protein sequence ID" value="BAF96735.1"/>
    <property type="molecule type" value="Genomic_DNA"/>
</dbReference>
<dbReference type="EMBL" id="CP000253">
    <property type="protein sequence ID" value="ABD30364.1"/>
    <property type="molecule type" value="Genomic_DNA"/>
</dbReference>
<dbReference type="RefSeq" id="WP_001050913.1">
    <property type="nucleotide sequence ID" value="NZ_LS483365.1"/>
</dbReference>
<dbReference type="RefSeq" id="YP_499796.1">
    <property type="nucleotide sequence ID" value="NC_007795.1"/>
</dbReference>
<dbReference type="SMR" id="Q2FZ08"/>
<dbReference type="STRING" id="93061.SAOUHSC_01263"/>
<dbReference type="PaxDb" id="1280-SAXN108_1291"/>
<dbReference type="GeneID" id="3919916"/>
<dbReference type="KEGG" id="sao:SAOUHSC_01263"/>
<dbReference type="PATRIC" id="fig|93061.5.peg.1157"/>
<dbReference type="eggNOG" id="COG1418">
    <property type="taxonomic scope" value="Bacteria"/>
</dbReference>
<dbReference type="HOGENOM" id="CLU_028328_1_0_9"/>
<dbReference type="OrthoDB" id="9803205at2"/>
<dbReference type="SABIO-RK" id="Q2FZ08"/>
<dbReference type="PHI-base" id="PHI:2965"/>
<dbReference type="PHI-base" id="PHI:6427"/>
<dbReference type="PHI-base" id="PHI:8891"/>
<dbReference type="PRO" id="PR:Q2FZ08"/>
<dbReference type="Proteomes" id="UP000008816">
    <property type="component" value="Chromosome"/>
</dbReference>
<dbReference type="GO" id="GO:0005886">
    <property type="term" value="C:plasma membrane"/>
    <property type="evidence" value="ECO:0007669"/>
    <property type="project" value="UniProtKB-SubCell"/>
</dbReference>
<dbReference type="GO" id="GO:0003723">
    <property type="term" value="F:RNA binding"/>
    <property type="evidence" value="ECO:0007669"/>
    <property type="project" value="UniProtKB-UniRule"/>
</dbReference>
<dbReference type="GO" id="GO:0004521">
    <property type="term" value="F:RNA endonuclease activity"/>
    <property type="evidence" value="ECO:0007669"/>
    <property type="project" value="UniProtKB-UniRule"/>
</dbReference>
<dbReference type="GO" id="GO:0006402">
    <property type="term" value="P:mRNA catabolic process"/>
    <property type="evidence" value="ECO:0007669"/>
    <property type="project" value="UniProtKB-UniRule"/>
</dbReference>
<dbReference type="CDD" id="cd00077">
    <property type="entry name" value="HDc"/>
    <property type="match status" value="1"/>
</dbReference>
<dbReference type="CDD" id="cd22431">
    <property type="entry name" value="KH-I_RNaseY"/>
    <property type="match status" value="1"/>
</dbReference>
<dbReference type="FunFam" id="1.10.3210.10:FF:000003">
    <property type="entry name" value="Ribonuclease Y"/>
    <property type="match status" value="1"/>
</dbReference>
<dbReference type="FunFam" id="3.30.1370.10:FF:000006">
    <property type="entry name" value="Ribonuclease Y"/>
    <property type="match status" value="1"/>
</dbReference>
<dbReference type="Gene3D" id="1.10.3210.10">
    <property type="entry name" value="Hypothetical protein af1432"/>
    <property type="match status" value="1"/>
</dbReference>
<dbReference type="Gene3D" id="3.30.1370.10">
    <property type="entry name" value="K Homology domain, type 1"/>
    <property type="match status" value="1"/>
</dbReference>
<dbReference type="HAMAP" id="MF_00335">
    <property type="entry name" value="RNase_Y"/>
    <property type="match status" value="1"/>
</dbReference>
<dbReference type="InterPro" id="IPR003607">
    <property type="entry name" value="HD/PDEase_dom"/>
</dbReference>
<dbReference type="InterPro" id="IPR006674">
    <property type="entry name" value="HD_domain"/>
</dbReference>
<dbReference type="InterPro" id="IPR006675">
    <property type="entry name" value="HDIG_dom"/>
</dbReference>
<dbReference type="InterPro" id="IPR004087">
    <property type="entry name" value="KH_dom"/>
</dbReference>
<dbReference type="InterPro" id="IPR004088">
    <property type="entry name" value="KH_dom_type_1"/>
</dbReference>
<dbReference type="InterPro" id="IPR036612">
    <property type="entry name" value="KH_dom_type_1_sf"/>
</dbReference>
<dbReference type="InterPro" id="IPR017705">
    <property type="entry name" value="Ribonuclease_Y"/>
</dbReference>
<dbReference type="InterPro" id="IPR022711">
    <property type="entry name" value="RNase_Y_N"/>
</dbReference>
<dbReference type="NCBIfam" id="TIGR00277">
    <property type="entry name" value="HDIG"/>
    <property type="match status" value="1"/>
</dbReference>
<dbReference type="NCBIfam" id="TIGR03319">
    <property type="entry name" value="RNase_Y"/>
    <property type="match status" value="1"/>
</dbReference>
<dbReference type="PANTHER" id="PTHR12826">
    <property type="entry name" value="RIBONUCLEASE Y"/>
    <property type="match status" value="1"/>
</dbReference>
<dbReference type="PANTHER" id="PTHR12826:SF15">
    <property type="entry name" value="RIBONUCLEASE Y"/>
    <property type="match status" value="1"/>
</dbReference>
<dbReference type="Pfam" id="PF01966">
    <property type="entry name" value="HD"/>
    <property type="match status" value="1"/>
</dbReference>
<dbReference type="Pfam" id="PF00013">
    <property type="entry name" value="KH_1"/>
    <property type="match status" value="1"/>
</dbReference>
<dbReference type="Pfam" id="PF12072">
    <property type="entry name" value="RNase_Y_N"/>
    <property type="match status" value="1"/>
</dbReference>
<dbReference type="SMART" id="SM00471">
    <property type="entry name" value="HDc"/>
    <property type="match status" value="1"/>
</dbReference>
<dbReference type="SMART" id="SM00322">
    <property type="entry name" value="KH"/>
    <property type="match status" value="1"/>
</dbReference>
<dbReference type="SUPFAM" id="SSF54791">
    <property type="entry name" value="Eukaryotic type KH-domain (KH-domain type I)"/>
    <property type="match status" value="1"/>
</dbReference>
<dbReference type="SUPFAM" id="SSF109604">
    <property type="entry name" value="HD-domain/PDEase-like"/>
    <property type="match status" value="1"/>
</dbReference>
<dbReference type="PROSITE" id="PS51831">
    <property type="entry name" value="HD"/>
    <property type="match status" value="1"/>
</dbReference>
<dbReference type="PROSITE" id="PS50084">
    <property type="entry name" value="KH_TYPE_1"/>
    <property type="match status" value="1"/>
</dbReference>
<gene>
    <name type="primary">rny</name>
    <name type="synonym">cvfA</name>
    <name type="ordered locus">SAOUHSC_01263</name>
</gene>